<accession>B3E0J8</accession>
<sequence length="128" mass="14544">MITDPIADFCSAIQNAAYAKKKEIKVPYSFLKERIAQVMLHEGYLEKIEKIEVRKNIFELKVVLKEPALITKIKRISKPGLRQYVGYKEIPNILRGLGICILSTSRGIMAGHRAKRMKLGGELLLAIY</sequence>
<proteinExistence type="inferred from homology"/>
<reference key="1">
    <citation type="journal article" date="2008" name="Biol. Direct">
        <title>Complete genome sequence of the extremely acidophilic methanotroph isolate V4, Methylacidiphilum infernorum, a representative of the bacterial phylum Verrucomicrobia.</title>
        <authorList>
            <person name="Hou S."/>
            <person name="Makarova K.S."/>
            <person name="Saw J.H."/>
            <person name="Senin P."/>
            <person name="Ly B.V."/>
            <person name="Zhou Z."/>
            <person name="Ren Y."/>
            <person name="Wang J."/>
            <person name="Galperin M.Y."/>
            <person name="Omelchenko M.V."/>
            <person name="Wolf Y.I."/>
            <person name="Yutin N."/>
            <person name="Koonin E.V."/>
            <person name="Stott M.B."/>
            <person name="Mountain B.W."/>
            <person name="Crowe M.A."/>
            <person name="Smirnova A.V."/>
            <person name="Dunfield P.F."/>
            <person name="Feng L."/>
            <person name="Wang L."/>
            <person name="Alam M."/>
        </authorList>
    </citation>
    <scope>NUCLEOTIDE SEQUENCE [LARGE SCALE GENOMIC DNA]</scope>
    <source>
        <strain>Isolate V4</strain>
    </source>
</reference>
<dbReference type="EMBL" id="CP000975">
    <property type="protein sequence ID" value="ACD82752.1"/>
    <property type="molecule type" value="Genomic_DNA"/>
</dbReference>
<dbReference type="RefSeq" id="WP_012463034.1">
    <property type="nucleotide sequence ID" value="NC_010794.1"/>
</dbReference>
<dbReference type="SMR" id="B3E0J8"/>
<dbReference type="STRING" id="481448.Minf_0697"/>
<dbReference type="KEGG" id="min:Minf_0697"/>
<dbReference type="eggNOG" id="COG0096">
    <property type="taxonomic scope" value="Bacteria"/>
</dbReference>
<dbReference type="HOGENOM" id="CLU_098428_0_2_0"/>
<dbReference type="OrthoDB" id="9802617at2"/>
<dbReference type="Proteomes" id="UP000009149">
    <property type="component" value="Chromosome"/>
</dbReference>
<dbReference type="GO" id="GO:1990904">
    <property type="term" value="C:ribonucleoprotein complex"/>
    <property type="evidence" value="ECO:0007669"/>
    <property type="project" value="UniProtKB-KW"/>
</dbReference>
<dbReference type="GO" id="GO:0005840">
    <property type="term" value="C:ribosome"/>
    <property type="evidence" value="ECO:0007669"/>
    <property type="project" value="UniProtKB-KW"/>
</dbReference>
<dbReference type="GO" id="GO:0019843">
    <property type="term" value="F:rRNA binding"/>
    <property type="evidence" value="ECO:0007669"/>
    <property type="project" value="UniProtKB-UniRule"/>
</dbReference>
<dbReference type="GO" id="GO:0003735">
    <property type="term" value="F:structural constituent of ribosome"/>
    <property type="evidence" value="ECO:0007669"/>
    <property type="project" value="InterPro"/>
</dbReference>
<dbReference type="GO" id="GO:0006412">
    <property type="term" value="P:translation"/>
    <property type="evidence" value="ECO:0007669"/>
    <property type="project" value="UniProtKB-UniRule"/>
</dbReference>
<dbReference type="FunFam" id="3.30.1490.10:FF:000001">
    <property type="entry name" value="30S ribosomal protein S8"/>
    <property type="match status" value="1"/>
</dbReference>
<dbReference type="Gene3D" id="3.30.1370.30">
    <property type="match status" value="1"/>
</dbReference>
<dbReference type="Gene3D" id="3.30.1490.10">
    <property type="match status" value="1"/>
</dbReference>
<dbReference type="HAMAP" id="MF_01302_B">
    <property type="entry name" value="Ribosomal_uS8_B"/>
    <property type="match status" value="1"/>
</dbReference>
<dbReference type="InterPro" id="IPR000630">
    <property type="entry name" value="Ribosomal_uS8"/>
</dbReference>
<dbReference type="InterPro" id="IPR047863">
    <property type="entry name" value="Ribosomal_uS8_CS"/>
</dbReference>
<dbReference type="InterPro" id="IPR035987">
    <property type="entry name" value="Ribosomal_uS8_sf"/>
</dbReference>
<dbReference type="NCBIfam" id="NF001109">
    <property type="entry name" value="PRK00136.1"/>
    <property type="match status" value="1"/>
</dbReference>
<dbReference type="PANTHER" id="PTHR11758">
    <property type="entry name" value="40S RIBOSOMAL PROTEIN S15A"/>
    <property type="match status" value="1"/>
</dbReference>
<dbReference type="Pfam" id="PF00410">
    <property type="entry name" value="Ribosomal_S8"/>
    <property type="match status" value="1"/>
</dbReference>
<dbReference type="SUPFAM" id="SSF56047">
    <property type="entry name" value="Ribosomal protein S8"/>
    <property type="match status" value="1"/>
</dbReference>
<dbReference type="PROSITE" id="PS00053">
    <property type="entry name" value="RIBOSOMAL_S8"/>
    <property type="match status" value="1"/>
</dbReference>
<organism>
    <name type="scientific">Methylacidiphilum infernorum (isolate V4)</name>
    <name type="common">Methylokorus infernorum (strain V4)</name>
    <dbReference type="NCBI Taxonomy" id="481448"/>
    <lineage>
        <taxon>Bacteria</taxon>
        <taxon>Pseudomonadati</taxon>
        <taxon>Verrucomicrobiota</taxon>
        <taxon>Methylacidiphilae</taxon>
        <taxon>Methylacidiphilales</taxon>
        <taxon>Methylacidiphilaceae</taxon>
        <taxon>Methylacidiphilum (ex Ratnadevi et al. 2023)</taxon>
    </lineage>
</organism>
<protein>
    <recommendedName>
        <fullName evidence="1">Small ribosomal subunit protein uS8</fullName>
    </recommendedName>
    <alternativeName>
        <fullName evidence="2">30S ribosomal protein S8</fullName>
    </alternativeName>
</protein>
<gene>
    <name evidence="1" type="primary">rpsH</name>
    <name type="ordered locus">Minf_0697</name>
</gene>
<feature type="chain" id="PRO_1000140579" description="Small ribosomal subunit protein uS8">
    <location>
        <begin position="1"/>
        <end position="128"/>
    </location>
</feature>
<keyword id="KW-0687">Ribonucleoprotein</keyword>
<keyword id="KW-0689">Ribosomal protein</keyword>
<keyword id="KW-0694">RNA-binding</keyword>
<keyword id="KW-0699">rRNA-binding</keyword>
<name>RS8_METI4</name>
<evidence type="ECO:0000255" key="1">
    <source>
        <dbReference type="HAMAP-Rule" id="MF_01302"/>
    </source>
</evidence>
<evidence type="ECO:0000305" key="2"/>
<comment type="function">
    <text evidence="1">One of the primary rRNA binding proteins, it binds directly to 16S rRNA central domain where it helps coordinate assembly of the platform of the 30S subunit.</text>
</comment>
<comment type="subunit">
    <text evidence="1">Part of the 30S ribosomal subunit. Contacts proteins S5 and S12.</text>
</comment>
<comment type="similarity">
    <text evidence="1">Belongs to the universal ribosomal protein uS8 family.</text>
</comment>